<name>DAPB_METM7</name>
<accession>A6VFL4</accession>
<reference key="1">
    <citation type="submission" date="2007-06" db="EMBL/GenBank/DDBJ databases">
        <title>Complete sequence of Methanococcus maripaludis C7.</title>
        <authorList>
            <consortium name="US DOE Joint Genome Institute"/>
            <person name="Copeland A."/>
            <person name="Lucas S."/>
            <person name="Lapidus A."/>
            <person name="Barry K."/>
            <person name="Glavina del Rio T."/>
            <person name="Dalin E."/>
            <person name="Tice H."/>
            <person name="Pitluck S."/>
            <person name="Clum A."/>
            <person name="Schmutz J."/>
            <person name="Larimer F."/>
            <person name="Land M."/>
            <person name="Hauser L."/>
            <person name="Kyrpides N."/>
            <person name="Anderson I."/>
            <person name="Sieprawska-Lupa M."/>
            <person name="Whitman W.B."/>
            <person name="Richardson P."/>
        </authorList>
    </citation>
    <scope>NUCLEOTIDE SEQUENCE [LARGE SCALE GENOMIC DNA]</scope>
    <source>
        <strain>C7 / ATCC BAA-1331</strain>
    </source>
</reference>
<proteinExistence type="inferred from homology"/>
<feature type="chain" id="PRO_1000008590" description="4-hydroxy-tetrahydrodipicolinate reductase">
    <location>
        <begin position="1"/>
        <end position="270"/>
    </location>
</feature>
<feature type="active site" description="Proton donor/acceptor" evidence="1">
    <location>
        <position position="160"/>
    </location>
</feature>
<feature type="active site" description="Proton donor" evidence="1">
    <location>
        <position position="164"/>
    </location>
</feature>
<feature type="binding site" evidence="1">
    <location>
        <begin position="8"/>
        <end position="13"/>
    </location>
    <ligand>
        <name>NAD(+)</name>
        <dbReference type="ChEBI" id="CHEBI:57540"/>
    </ligand>
</feature>
<feature type="binding site" evidence="1">
    <location>
        <position position="34"/>
    </location>
    <ligand>
        <name>NAD(+)</name>
        <dbReference type="ChEBI" id="CHEBI:57540"/>
    </ligand>
</feature>
<feature type="binding site" evidence="1">
    <location>
        <begin position="102"/>
        <end position="104"/>
    </location>
    <ligand>
        <name>NAD(+)</name>
        <dbReference type="ChEBI" id="CHEBI:57540"/>
    </ligand>
</feature>
<feature type="binding site" evidence="1">
    <location>
        <begin position="128"/>
        <end position="131"/>
    </location>
    <ligand>
        <name>NAD(+)</name>
        <dbReference type="ChEBI" id="CHEBI:57540"/>
    </ligand>
</feature>
<feature type="binding site" evidence="1">
    <location>
        <position position="161"/>
    </location>
    <ligand>
        <name>(S)-2,3,4,5-tetrahydrodipicolinate</name>
        <dbReference type="ChEBI" id="CHEBI:16845"/>
    </ligand>
</feature>
<feature type="binding site" evidence="1">
    <location>
        <begin position="170"/>
        <end position="171"/>
    </location>
    <ligand>
        <name>(S)-2,3,4,5-tetrahydrodipicolinate</name>
        <dbReference type="ChEBI" id="CHEBI:16845"/>
    </ligand>
</feature>
<sequence length="270" mass="28933">MVKVAVTGALGRMGSGIIKTITETDGLDVVAAIDIPNHPKKGQDIGELTGLGKIGVSLSTSDELEAILKESGAEVLVDFTAAAPCVNTAKTAAKLGVNLVIGTTGFTPEQRAEMENAISENKVAATISQNYAVGVNIFFKTLELLAQKLGDYDIEILEMHHKFKKDAPSGTALRAAEIIQNNLNRDSNIIYGREGITGERTKEEICIHALRGGDIVGDHTVIFTTDGERLELSHRVTSRQSLVSGAIRAIQFVADKKEGIYNTFDVLDLN</sequence>
<comment type="function">
    <text evidence="1">Catalyzes the conversion of 4-hydroxy-tetrahydrodipicolinate (HTPA) to tetrahydrodipicolinate.</text>
</comment>
<comment type="catalytic activity">
    <reaction evidence="1">
        <text>(S)-2,3,4,5-tetrahydrodipicolinate + NAD(+) + H2O = (2S,4S)-4-hydroxy-2,3,4,5-tetrahydrodipicolinate + NADH + H(+)</text>
        <dbReference type="Rhea" id="RHEA:35323"/>
        <dbReference type="ChEBI" id="CHEBI:15377"/>
        <dbReference type="ChEBI" id="CHEBI:15378"/>
        <dbReference type="ChEBI" id="CHEBI:16845"/>
        <dbReference type="ChEBI" id="CHEBI:57540"/>
        <dbReference type="ChEBI" id="CHEBI:57945"/>
        <dbReference type="ChEBI" id="CHEBI:67139"/>
        <dbReference type="EC" id="1.17.1.8"/>
    </reaction>
</comment>
<comment type="catalytic activity">
    <reaction evidence="1">
        <text>(S)-2,3,4,5-tetrahydrodipicolinate + NADP(+) + H2O = (2S,4S)-4-hydroxy-2,3,4,5-tetrahydrodipicolinate + NADPH + H(+)</text>
        <dbReference type="Rhea" id="RHEA:35331"/>
        <dbReference type="ChEBI" id="CHEBI:15377"/>
        <dbReference type="ChEBI" id="CHEBI:15378"/>
        <dbReference type="ChEBI" id="CHEBI:16845"/>
        <dbReference type="ChEBI" id="CHEBI:57783"/>
        <dbReference type="ChEBI" id="CHEBI:58349"/>
        <dbReference type="ChEBI" id="CHEBI:67139"/>
        <dbReference type="EC" id="1.17.1.8"/>
    </reaction>
</comment>
<comment type="pathway">
    <text evidence="1">Amino-acid biosynthesis; L-lysine biosynthesis via DAP pathway; (S)-tetrahydrodipicolinate from L-aspartate: step 4/4.</text>
</comment>
<comment type="subcellular location">
    <subcellularLocation>
        <location evidence="1">Cytoplasm</location>
    </subcellularLocation>
</comment>
<comment type="similarity">
    <text evidence="1">Belongs to the DapB family.</text>
</comment>
<comment type="caution">
    <text evidence="2">Was originally thought to be a dihydrodipicolinate reductase (DHDPR), catalyzing the conversion of dihydrodipicolinate to tetrahydrodipicolinate. However, it was shown in E.coli that the substrate of the enzymatic reaction is not dihydrodipicolinate (DHDP) but in fact (2S,4S)-4-hydroxy-2,3,4,5-tetrahydrodipicolinic acid (HTPA), the product released by the DapA-catalyzed reaction.</text>
</comment>
<dbReference type="EC" id="1.17.1.8" evidence="1"/>
<dbReference type="EMBL" id="CP000745">
    <property type="protein sequence ID" value="ABR65240.1"/>
    <property type="molecule type" value="Genomic_DNA"/>
</dbReference>
<dbReference type="SMR" id="A6VFL4"/>
<dbReference type="STRING" id="426368.MmarC7_0170"/>
<dbReference type="KEGG" id="mmz:MmarC7_0170"/>
<dbReference type="eggNOG" id="arCOG04393">
    <property type="taxonomic scope" value="Archaea"/>
</dbReference>
<dbReference type="HOGENOM" id="CLU_047479_2_1_2"/>
<dbReference type="OrthoDB" id="195035at2157"/>
<dbReference type="UniPathway" id="UPA00034">
    <property type="reaction ID" value="UER00018"/>
</dbReference>
<dbReference type="GO" id="GO:0005737">
    <property type="term" value="C:cytoplasm"/>
    <property type="evidence" value="ECO:0007669"/>
    <property type="project" value="UniProtKB-SubCell"/>
</dbReference>
<dbReference type="GO" id="GO:0008839">
    <property type="term" value="F:4-hydroxy-tetrahydrodipicolinate reductase"/>
    <property type="evidence" value="ECO:0007669"/>
    <property type="project" value="UniProtKB-EC"/>
</dbReference>
<dbReference type="GO" id="GO:0051287">
    <property type="term" value="F:NAD binding"/>
    <property type="evidence" value="ECO:0007669"/>
    <property type="project" value="UniProtKB-UniRule"/>
</dbReference>
<dbReference type="GO" id="GO:0050661">
    <property type="term" value="F:NADP binding"/>
    <property type="evidence" value="ECO:0007669"/>
    <property type="project" value="UniProtKB-UniRule"/>
</dbReference>
<dbReference type="GO" id="GO:0016726">
    <property type="term" value="F:oxidoreductase activity, acting on CH or CH2 groups, NAD or NADP as acceptor"/>
    <property type="evidence" value="ECO:0007669"/>
    <property type="project" value="UniProtKB-UniRule"/>
</dbReference>
<dbReference type="GO" id="GO:0019877">
    <property type="term" value="P:diaminopimelate biosynthetic process"/>
    <property type="evidence" value="ECO:0007669"/>
    <property type="project" value="UniProtKB-UniRule"/>
</dbReference>
<dbReference type="GO" id="GO:0009089">
    <property type="term" value="P:lysine biosynthetic process via diaminopimelate"/>
    <property type="evidence" value="ECO:0007669"/>
    <property type="project" value="UniProtKB-UniRule"/>
</dbReference>
<dbReference type="CDD" id="cd02274">
    <property type="entry name" value="DHDPR_N"/>
    <property type="match status" value="1"/>
</dbReference>
<dbReference type="FunFam" id="3.30.360.10:FF:000004">
    <property type="entry name" value="4-hydroxy-tetrahydrodipicolinate reductase"/>
    <property type="match status" value="1"/>
</dbReference>
<dbReference type="Gene3D" id="3.30.360.10">
    <property type="entry name" value="Dihydrodipicolinate Reductase, domain 2"/>
    <property type="match status" value="1"/>
</dbReference>
<dbReference type="Gene3D" id="3.40.50.720">
    <property type="entry name" value="NAD(P)-binding Rossmann-like Domain"/>
    <property type="match status" value="1"/>
</dbReference>
<dbReference type="HAMAP" id="MF_00102">
    <property type="entry name" value="DapB"/>
    <property type="match status" value="1"/>
</dbReference>
<dbReference type="InterPro" id="IPR022663">
    <property type="entry name" value="DapB_C"/>
</dbReference>
<dbReference type="InterPro" id="IPR000846">
    <property type="entry name" value="DapB_N"/>
</dbReference>
<dbReference type="InterPro" id="IPR022664">
    <property type="entry name" value="DapB_N_CS"/>
</dbReference>
<dbReference type="InterPro" id="IPR023940">
    <property type="entry name" value="DHDPR_bac"/>
</dbReference>
<dbReference type="InterPro" id="IPR036291">
    <property type="entry name" value="NAD(P)-bd_dom_sf"/>
</dbReference>
<dbReference type="NCBIfam" id="TIGR00036">
    <property type="entry name" value="dapB"/>
    <property type="match status" value="1"/>
</dbReference>
<dbReference type="PANTHER" id="PTHR20836:SF0">
    <property type="entry name" value="4-HYDROXY-TETRAHYDRODIPICOLINATE REDUCTASE 1, CHLOROPLASTIC-RELATED"/>
    <property type="match status" value="1"/>
</dbReference>
<dbReference type="PANTHER" id="PTHR20836">
    <property type="entry name" value="DIHYDRODIPICOLINATE REDUCTASE"/>
    <property type="match status" value="1"/>
</dbReference>
<dbReference type="Pfam" id="PF05173">
    <property type="entry name" value="DapB_C"/>
    <property type="match status" value="1"/>
</dbReference>
<dbReference type="Pfam" id="PF01113">
    <property type="entry name" value="DapB_N"/>
    <property type="match status" value="1"/>
</dbReference>
<dbReference type="PIRSF" id="PIRSF000161">
    <property type="entry name" value="DHPR"/>
    <property type="match status" value="1"/>
</dbReference>
<dbReference type="SUPFAM" id="SSF55347">
    <property type="entry name" value="Glyceraldehyde-3-phosphate dehydrogenase-like, C-terminal domain"/>
    <property type="match status" value="1"/>
</dbReference>
<dbReference type="SUPFAM" id="SSF51735">
    <property type="entry name" value="NAD(P)-binding Rossmann-fold domains"/>
    <property type="match status" value="1"/>
</dbReference>
<dbReference type="PROSITE" id="PS01298">
    <property type="entry name" value="DAPB"/>
    <property type="match status" value="1"/>
</dbReference>
<gene>
    <name evidence="1" type="primary">dapB</name>
    <name type="ordered locus">MmarC7_0170</name>
</gene>
<keyword id="KW-0028">Amino-acid biosynthesis</keyword>
<keyword id="KW-0963">Cytoplasm</keyword>
<keyword id="KW-0220">Diaminopimelate biosynthesis</keyword>
<keyword id="KW-0457">Lysine biosynthesis</keyword>
<keyword id="KW-0520">NAD</keyword>
<keyword id="KW-0521">NADP</keyword>
<keyword id="KW-0560">Oxidoreductase</keyword>
<protein>
    <recommendedName>
        <fullName evidence="1">4-hydroxy-tetrahydrodipicolinate reductase</fullName>
        <shortName evidence="1">HTPA reductase</shortName>
        <ecNumber evidence="1">1.17.1.8</ecNumber>
    </recommendedName>
</protein>
<evidence type="ECO:0000255" key="1">
    <source>
        <dbReference type="HAMAP-Rule" id="MF_00102"/>
    </source>
</evidence>
<evidence type="ECO:0000305" key="2"/>
<organism>
    <name type="scientific">Methanococcus maripaludis (strain C7 / ATCC BAA-1331)</name>
    <dbReference type="NCBI Taxonomy" id="426368"/>
    <lineage>
        <taxon>Archaea</taxon>
        <taxon>Methanobacteriati</taxon>
        <taxon>Methanobacteriota</taxon>
        <taxon>Methanomada group</taxon>
        <taxon>Methanococci</taxon>
        <taxon>Methanococcales</taxon>
        <taxon>Methanococcaceae</taxon>
        <taxon>Methanococcus</taxon>
    </lineage>
</organism>